<reference key="1">
    <citation type="journal article" date="2019" name="J. Microbiol. Biotechnol.">
        <title>A gene cluster for the biosynthesis of dibenzodioxocinons in the endophyte Pestalotiopsis microspora, a taxol producer.</title>
        <authorList>
            <person name="Liu Y."/>
            <person name="Chen L."/>
            <person name="Xie Q."/>
            <person name="Yu X."/>
            <person name="Duan A."/>
            <person name="Lin Y."/>
            <person name="Xiang B."/>
            <person name="Hao X."/>
            <person name="Chen W."/>
            <person name="Zhu X."/>
        </authorList>
    </citation>
    <scope>NUCLEOTIDE SEQUENCE [MRNA]</scope>
    <scope>FUNCTION</scope>
    <source>
        <strain>NK17</strain>
    </source>
</reference>
<reference key="2">
    <citation type="journal article" date="2022" name="Microbiol. Res.">
        <title>Acquiring novel chemicals by overexpression of a transcription factor DibT in the dibenzodioxocinone biosynthetic cluster in Pestalotiopsis microspora.</title>
        <authorList>
            <person name="Liu Y."/>
            <person name="Fu Y."/>
            <person name="Zhou M."/>
            <person name="Hao X."/>
            <person name="Zhang P."/>
            <person name="Zhu X."/>
        </authorList>
    </citation>
    <scope>INDUCTION</scope>
</reference>
<proteinExistence type="evidence at transcript level"/>
<organism>
    <name type="scientific">Pestalotiopsis microspora</name>
    <dbReference type="NCBI Taxonomy" id="85828"/>
    <lineage>
        <taxon>Eukaryota</taxon>
        <taxon>Fungi</taxon>
        <taxon>Dikarya</taxon>
        <taxon>Ascomycota</taxon>
        <taxon>Pezizomycotina</taxon>
        <taxon>Sordariomycetes</taxon>
        <taxon>Xylariomycetidae</taxon>
        <taxon>Amphisphaeriales</taxon>
        <taxon>Sporocadaceae</taxon>
        <taxon>Pestalotiopsis</taxon>
    </lineage>
</organism>
<name>GME70_PESMI</name>
<sequence>MNSPSPPRAEPKLRDSCHACAASKLKCSKEKPSCARCLKRNKPCQYLVTRRAGRHHGSRSKKVPTISPASAPEPQPFSTTPPDGDFMIEDYFATPISLQFPDFVDTSNGSTTQDWSTHPALFDTTNTSPLFDTSTLNFFDAAESLSAPLQLPTSTIPFPEISHGLQGLPTEHHCGCLVQVLQLMKKLSPSTPVHCTAWPGQQLDKDSGSALLLQPIIAENQSILETVATVLACPCSEDGFLLSTICLVVLKVMSRYEAAARCASLSATNSRSEDALVEDNVAQFTATGSSVAVLIGSYKVEGEGFDRMRAHIVLSELHRVQGLMKGLSERLHVAGRNAKDDNILHASRMNVDSDAVTGAGASAGEDVPMGDATEAVLPFHASFFGQLEANLRRRLRRLSESTTDLVRRA</sequence>
<comment type="function">
    <text evidence="3">Transcriptional regulator; part of the gene cluster that mediates the biosynthesis of dibenzodioxocinones such as pestalotiollide B, a novel class of inhibitors against cholesterol ester transfer protein (CEPT).</text>
</comment>
<comment type="subcellular location">
    <subcellularLocation>
        <location evidence="1">Nucleus</location>
    </subcellularLocation>
</comment>
<comment type="induction">
    <text evidence="4">The expression of the dibenzodioxocinones biosynthesis cluster is positively regulated by the transcription factor dibT.</text>
</comment>
<keyword id="KW-0238">DNA-binding</keyword>
<keyword id="KW-0479">Metal-binding</keyword>
<keyword id="KW-0539">Nucleus</keyword>
<keyword id="KW-0804">Transcription</keyword>
<keyword id="KW-0805">Transcription regulation</keyword>
<dbReference type="EMBL" id="MK590989">
    <property type="protein sequence ID" value="QED41501.1"/>
    <property type="molecule type" value="mRNA"/>
</dbReference>
<dbReference type="SMR" id="A0A5B8YUX3"/>
<dbReference type="GO" id="GO:0005634">
    <property type="term" value="C:nucleus"/>
    <property type="evidence" value="ECO:0007669"/>
    <property type="project" value="UniProtKB-SubCell"/>
</dbReference>
<dbReference type="GO" id="GO:0003677">
    <property type="term" value="F:DNA binding"/>
    <property type="evidence" value="ECO:0007669"/>
    <property type="project" value="UniProtKB-KW"/>
</dbReference>
<dbReference type="GO" id="GO:0000981">
    <property type="term" value="F:DNA-binding transcription factor activity, RNA polymerase II-specific"/>
    <property type="evidence" value="ECO:0007669"/>
    <property type="project" value="InterPro"/>
</dbReference>
<dbReference type="GO" id="GO:0008270">
    <property type="term" value="F:zinc ion binding"/>
    <property type="evidence" value="ECO:0007669"/>
    <property type="project" value="InterPro"/>
</dbReference>
<dbReference type="GO" id="GO:0045122">
    <property type="term" value="P:aflatoxin biosynthetic process"/>
    <property type="evidence" value="ECO:0007669"/>
    <property type="project" value="InterPro"/>
</dbReference>
<dbReference type="CDD" id="cd00067">
    <property type="entry name" value="GAL4"/>
    <property type="match status" value="1"/>
</dbReference>
<dbReference type="Gene3D" id="4.10.240.10">
    <property type="entry name" value="Zn(2)-C6 fungal-type DNA-binding domain"/>
    <property type="match status" value="1"/>
</dbReference>
<dbReference type="InterPro" id="IPR013700">
    <property type="entry name" value="AflR"/>
</dbReference>
<dbReference type="InterPro" id="IPR050675">
    <property type="entry name" value="OAF3"/>
</dbReference>
<dbReference type="InterPro" id="IPR036864">
    <property type="entry name" value="Zn2-C6_fun-type_DNA-bd_sf"/>
</dbReference>
<dbReference type="InterPro" id="IPR001138">
    <property type="entry name" value="Zn2Cys6_DnaBD"/>
</dbReference>
<dbReference type="PANTHER" id="PTHR31069:SF31">
    <property type="entry name" value="MONODICTYPHENONE CLUSTER TRANSCRIPTION FACTOR-RELATED"/>
    <property type="match status" value="1"/>
</dbReference>
<dbReference type="PANTHER" id="PTHR31069">
    <property type="entry name" value="OLEATE-ACTIVATED TRANSCRIPTION FACTOR 1-RELATED"/>
    <property type="match status" value="1"/>
</dbReference>
<dbReference type="Pfam" id="PF08493">
    <property type="entry name" value="AflR"/>
    <property type="match status" value="1"/>
</dbReference>
<dbReference type="Pfam" id="PF00172">
    <property type="entry name" value="Zn_clus"/>
    <property type="match status" value="1"/>
</dbReference>
<dbReference type="PRINTS" id="PR00755">
    <property type="entry name" value="AFLATOXINBRP"/>
</dbReference>
<dbReference type="SMART" id="SM00066">
    <property type="entry name" value="GAL4"/>
    <property type="match status" value="1"/>
</dbReference>
<dbReference type="SUPFAM" id="SSF57701">
    <property type="entry name" value="Zn2/Cys6 DNA-binding domain"/>
    <property type="match status" value="1"/>
</dbReference>
<dbReference type="PROSITE" id="PS00463">
    <property type="entry name" value="ZN2_CY6_FUNGAL_1"/>
    <property type="match status" value="1"/>
</dbReference>
<dbReference type="PROSITE" id="PS50048">
    <property type="entry name" value="ZN2_CY6_FUNGAL_2"/>
    <property type="match status" value="1"/>
</dbReference>
<feature type="chain" id="PRO_0000456735" description="Transcriptional regulator GME11370">
    <location>
        <begin position="1"/>
        <end position="409"/>
    </location>
</feature>
<feature type="DNA-binding region" description="Zn(2)-C6 fungal-type" evidence="1">
    <location>
        <begin position="17"/>
        <end position="44"/>
    </location>
</feature>
<feature type="region of interest" description="Disordered" evidence="2">
    <location>
        <begin position="49"/>
        <end position="83"/>
    </location>
</feature>
<feature type="compositionally biased region" description="Basic residues" evidence="2">
    <location>
        <begin position="51"/>
        <end position="62"/>
    </location>
</feature>
<gene>
    <name evidence="5" type="ORF">GME11370</name>
</gene>
<evidence type="ECO:0000255" key="1">
    <source>
        <dbReference type="PROSITE-ProRule" id="PRU00227"/>
    </source>
</evidence>
<evidence type="ECO:0000256" key="2">
    <source>
        <dbReference type="SAM" id="MobiDB-lite"/>
    </source>
</evidence>
<evidence type="ECO:0000269" key="3">
    <source>
    </source>
</evidence>
<evidence type="ECO:0000269" key="4">
    <source>
    </source>
</evidence>
<evidence type="ECO:0000303" key="5">
    <source>
    </source>
</evidence>
<accession>A0A5B8YUX3</accession>
<protein>
    <recommendedName>
        <fullName evidence="5">Transcriptional regulator GME11370</fullName>
    </recommendedName>
    <alternativeName>
        <fullName evidence="5">Dibenzodioxocinones biosynthesis cluster protein GME11370</fullName>
    </alternativeName>
</protein>